<sequence length="276" mass="30040">MAAGFKTVEPLEYYRRFLKENCRPDGRELGEFRTTTVNIGSISTADGSALVKLGNTTVICGVKAEFAAPSTDAPDKGYVVPNVDLPPLCSSRFRSGPPGEEAQVASQFIADVIENSQIIQKEDLCISPGKLVWVLYCDLICLDYDGNILDACTFALLAALKNVQLPEVTINEETALAEVNLKKKSYLNIRTHPVATSFAVFDDTLLIVDPTGEEEHLATGTLTIVMDEEGKLCCLHKPGGSGLTGAKLQDCMSRAVTRHKEVKKLMDEVIKSMKPK</sequence>
<proteinExistence type="evidence at protein level"/>
<keyword id="KW-0002">3D-structure</keyword>
<keyword id="KW-0007">Acetylation</keyword>
<keyword id="KW-0963">Cytoplasm</keyword>
<keyword id="KW-0225">Disease variant</keyword>
<keyword id="KW-0271">Exosome</keyword>
<keyword id="KW-0523">Neurodegeneration</keyword>
<keyword id="KW-0539">Nucleus</keyword>
<keyword id="KW-1267">Proteomics identification</keyword>
<keyword id="KW-1185">Reference proteome</keyword>
<keyword id="KW-0694">RNA-binding</keyword>
<keyword id="KW-0698">rRNA processing</keyword>
<evidence type="ECO:0000250" key="1"/>
<evidence type="ECO:0000269" key="2">
    <source>
    </source>
</evidence>
<evidence type="ECO:0000269" key="3">
    <source>
    </source>
</evidence>
<evidence type="ECO:0000269" key="4">
    <source>
    </source>
</evidence>
<evidence type="ECO:0000269" key="5">
    <source>
    </source>
</evidence>
<evidence type="ECO:0000269" key="6">
    <source>
    </source>
</evidence>
<evidence type="ECO:0000269" key="7">
    <source>
    </source>
</evidence>
<evidence type="ECO:0000269" key="8">
    <source>
    </source>
</evidence>
<evidence type="ECO:0000269" key="9">
    <source>
    </source>
</evidence>
<evidence type="ECO:0000305" key="10"/>
<evidence type="ECO:0007744" key="11">
    <source>
        <dbReference type="PDB" id="2NN6"/>
    </source>
</evidence>
<evidence type="ECO:0007744" key="12">
    <source>
        <dbReference type="PDB" id="6D6Q"/>
    </source>
</evidence>
<evidence type="ECO:0007744" key="13">
    <source>
        <dbReference type="PDB" id="6D6R"/>
    </source>
</evidence>
<evidence type="ECO:0007744" key="14">
    <source>
        <dbReference type="PDB" id="6H25"/>
    </source>
</evidence>
<evidence type="ECO:0007744" key="15">
    <source>
    </source>
</evidence>
<evidence type="ECO:0007829" key="16">
    <source>
        <dbReference type="PDB" id="2NN6"/>
    </source>
</evidence>
<evidence type="ECO:0007829" key="17">
    <source>
        <dbReference type="PDB" id="6D6Q"/>
    </source>
</evidence>
<accession>Q96B26</accession>
<accession>O43480</accession>
<accession>Q5TBA5</accession>
<reference key="1">
    <citation type="journal article" date="2004" name="Nature">
        <title>The DNA sequence and analysis of human chromosome 13.</title>
        <authorList>
            <person name="Dunham A."/>
            <person name="Matthews L.H."/>
            <person name="Burton J."/>
            <person name="Ashurst J.L."/>
            <person name="Howe K.L."/>
            <person name="Ashcroft K.J."/>
            <person name="Beare D.M."/>
            <person name="Burford D.C."/>
            <person name="Hunt S.E."/>
            <person name="Griffiths-Jones S."/>
            <person name="Jones M.C."/>
            <person name="Keenan S.J."/>
            <person name="Oliver K."/>
            <person name="Scott C.E."/>
            <person name="Ainscough R."/>
            <person name="Almeida J.P."/>
            <person name="Ambrose K.D."/>
            <person name="Andrews D.T."/>
            <person name="Ashwell R.I.S."/>
            <person name="Babbage A.K."/>
            <person name="Bagguley C.L."/>
            <person name="Bailey J."/>
            <person name="Bannerjee R."/>
            <person name="Barlow K.F."/>
            <person name="Bates K."/>
            <person name="Beasley H."/>
            <person name="Bird C.P."/>
            <person name="Bray-Allen S."/>
            <person name="Brown A.J."/>
            <person name="Brown J.Y."/>
            <person name="Burrill W."/>
            <person name="Carder C."/>
            <person name="Carter N.P."/>
            <person name="Chapman J.C."/>
            <person name="Clamp M.E."/>
            <person name="Clark S.Y."/>
            <person name="Clarke G."/>
            <person name="Clee C.M."/>
            <person name="Clegg S.C."/>
            <person name="Cobley V."/>
            <person name="Collins J.E."/>
            <person name="Corby N."/>
            <person name="Coville G.J."/>
            <person name="Deloukas P."/>
            <person name="Dhami P."/>
            <person name="Dunham I."/>
            <person name="Dunn M."/>
            <person name="Earthrowl M.E."/>
            <person name="Ellington A.G."/>
            <person name="Faulkner L."/>
            <person name="Frankish A.G."/>
            <person name="Frankland J."/>
            <person name="French L."/>
            <person name="Garner P."/>
            <person name="Garnett J."/>
            <person name="Gilbert J.G.R."/>
            <person name="Gilson C.J."/>
            <person name="Ghori J."/>
            <person name="Grafham D.V."/>
            <person name="Gribble S.M."/>
            <person name="Griffiths C."/>
            <person name="Hall R.E."/>
            <person name="Hammond S."/>
            <person name="Harley J.L."/>
            <person name="Hart E.A."/>
            <person name="Heath P.D."/>
            <person name="Howden P.J."/>
            <person name="Huckle E.J."/>
            <person name="Hunt P.J."/>
            <person name="Hunt A.R."/>
            <person name="Johnson C."/>
            <person name="Johnson D."/>
            <person name="Kay M."/>
            <person name="Kimberley A.M."/>
            <person name="King A."/>
            <person name="Laird G.K."/>
            <person name="Langford C.J."/>
            <person name="Lawlor S."/>
            <person name="Leongamornlert D.A."/>
            <person name="Lloyd D.M."/>
            <person name="Lloyd C."/>
            <person name="Loveland J.E."/>
            <person name="Lovell J."/>
            <person name="Martin S."/>
            <person name="Mashreghi-Mohammadi M."/>
            <person name="McLaren S.J."/>
            <person name="McMurray A."/>
            <person name="Milne S."/>
            <person name="Moore M.J.F."/>
            <person name="Nickerson T."/>
            <person name="Palmer S.A."/>
            <person name="Pearce A.V."/>
            <person name="Peck A.I."/>
            <person name="Pelan S."/>
            <person name="Phillimore B."/>
            <person name="Porter K.M."/>
            <person name="Rice C.M."/>
            <person name="Searle S."/>
            <person name="Sehra H.K."/>
            <person name="Shownkeen R."/>
            <person name="Skuce C.D."/>
            <person name="Smith M."/>
            <person name="Steward C.A."/>
            <person name="Sycamore N."/>
            <person name="Tester J."/>
            <person name="Thomas D.W."/>
            <person name="Tracey A."/>
            <person name="Tromans A."/>
            <person name="Tubby B."/>
            <person name="Wall M."/>
            <person name="Wallis J.M."/>
            <person name="West A.P."/>
            <person name="Whitehead S.L."/>
            <person name="Willey D.L."/>
            <person name="Wilming L."/>
            <person name="Wray P.W."/>
            <person name="Wright M.W."/>
            <person name="Young L."/>
            <person name="Coulson A."/>
            <person name="Durbin R.M."/>
            <person name="Hubbard T."/>
            <person name="Sulston J.E."/>
            <person name="Beck S."/>
            <person name="Bentley D.R."/>
            <person name="Rogers J."/>
            <person name="Ross M.T."/>
        </authorList>
    </citation>
    <scope>NUCLEOTIDE SEQUENCE [LARGE SCALE GENOMIC DNA]</scope>
</reference>
<reference key="2">
    <citation type="submission" date="2005-07" db="EMBL/GenBank/DDBJ databases">
        <authorList>
            <person name="Mural R.J."/>
            <person name="Istrail S."/>
            <person name="Sutton G.G."/>
            <person name="Florea L."/>
            <person name="Halpern A.L."/>
            <person name="Mobarry C.M."/>
            <person name="Lippert R."/>
            <person name="Walenz B."/>
            <person name="Shatkay H."/>
            <person name="Dew I."/>
            <person name="Miller J.R."/>
            <person name="Flanigan M.J."/>
            <person name="Edwards N.J."/>
            <person name="Bolanos R."/>
            <person name="Fasulo D."/>
            <person name="Halldorsson B.V."/>
            <person name="Hannenhalli S."/>
            <person name="Turner R."/>
            <person name="Yooseph S."/>
            <person name="Lu F."/>
            <person name="Nusskern D.R."/>
            <person name="Shue B.C."/>
            <person name="Zheng X.H."/>
            <person name="Zhong F."/>
            <person name="Delcher A.L."/>
            <person name="Huson D.H."/>
            <person name="Kravitz S.A."/>
            <person name="Mouchard L."/>
            <person name="Reinert K."/>
            <person name="Remington K.A."/>
            <person name="Clark A.G."/>
            <person name="Waterman M.S."/>
            <person name="Eichler E.E."/>
            <person name="Adams M.D."/>
            <person name="Hunkapiller M.W."/>
            <person name="Myers E.W."/>
            <person name="Venter J.C."/>
        </authorList>
    </citation>
    <scope>NUCLEOTIDE SEQUENCE [LARGE SCALE GENOMIC DNA]</scope>
</reference>
<reference key="3">
    <citation type="journal article" date="2004" name="Genome Res.">
        <title>The status, quality, and expansion of the NIH full-length cDNA project: the Mammalian Gene Collection (MGC).</title>
        <authorList>
            <consortium name="The MGC Project Team"/>
        </authorList>
    </citation>
    <scope>NUCLEOTIDE SEQUENCE [LARGE SCALE MRNA]</scope>
    <source>
        <tissue>Uterus</tissue>
    </source>
</reference>
<reference key="4">
    <citation type="journal article" date="1998" name="Mol. Microbiol.">
        <title>Using the yeast two-hybrid system to identify human epithelial cell proteins that bind gonococcal Opa proteins: intracellular gonococci bind pyruvate kinase via their Opa proteins and require host pyruvate for growth.</title>
        <authorList>
            <person name="Williams J.M."/>
            <person name="Chen G.-C."/>
            <person name="Zhu L."/>
            <person name="Rest R.F."/>
        </authorList>
    </citation>
    <scope>NUCLEOTIDE SEQUENCE [MRNA] OF 3-276</scope>
</reference>
<reference key="5">
    <citation type="journal article" date="2001" name="Cell">
        <title>AU binding proteins recruit the exosome to degrade ARE-containing mRNAs.</title>
        <authorList>
            <person name="Chen C.-Y."/>
            <person name="Gherzi R."/>
            <person name="Ong S.-E."/>
            <person name="Chan E.L."/>
            <person name="Raijmakers R."/>
            <person name="Pruijn G.J.M."/>
            <person name="Stoecklin G."/>
            <person name="Moroni C."/>
            <person name="Mann M."/>
            <person name="Karin M."/>
        </authorList>
    </citation>
    <scope>IDENTIFICATION BY MASS SPECTROMETRY</scope>
    <scope>IDENTIFICATION IN THE RNA EXOSOME CORE COMPLEX</scope>
</reference>
<reference key="6">
    <citation type="journal article" date="2002" name="J. Mol. Biol.">
        <title>Protein-protein interactions between human exosome components support the assembly of RNase PH-type subunits into a six-membered PNPase-like ring.</title>
        <authorList>
            <person name="Raijmakers R."/>
            <person name="Vree Egberts W."/>
            <person name="van Venrooij W.J."/>
            <person name="Pruijn G.J.M."/>
        </authorList>
    </citation>
    <scope>PROTEIN INTERACTION</scope>
</reference>
<reference key="7">
    <citation type="journal article" date="2004" name="Genome Res.">
        <title>A protein interaction framework for human mRNA degradation.</title>
        <authorList>
            <person name="Lehner B."/>
            <person name="Sanderson C.M."/>
        </authorList>
    </citation>
    <scope>PROTEIN INTERACTION</scope>
</reference>
<reference key="8">
    <citation type="journal article" date="2006" name="RNA">
        <title>Sequence-specific RNA binding mediated by the RNase PH domain of components of the exosome.</title>
        <authorList>
            <person name="Anderson J.R."/>
            <person name="Mukherjee D."/>
            <person name="Muthukumaraswamy K."/>
            <person name="Moraes K.C."/>
            <person name="Wilusz C.J."/>
            <person name="Wilusz J."/>
        </authorList>
    </citation>
    <scope>FUNCTION IN ARE-CONTAINING MRNA-BINDING</scope>
</reference>
<reference key="9">
    <citation type="journal article" date="2007" name="RNA">
        <title>Human cell growth requires a functional cytoplasmic exosome, which is involved in various mRNA decay pathways.</title>
        <authorList>
            <person name="van Dijk E.L."/>
            <person name="Schilders G."/>
            <person name="Pruijn G.J."/>
        </authorList>
    </citation>
    <scope>FUNCTION IN MRNA DEGRADATION</scope>
    <scope>SUBCELLULAR LOCATION</scope>
</reference>
<reference key="10">
    <citation type="journal article" date="2010" name="EMBO J.">
        <title>Dis3-like 1: a novel exoribonuclease associated with the human exosome.</title>
        <authorList>
            <person name="Staals R.H."/>
            <person name="Bronkhorst A.W."/>
            <person name="Schilders G."/>
            <person name="Slomovic S."/>
            <person name="Schuster G."/>
            <person name="Heck A.J."/>
            <person name="Raijmakers R."/>
            <person name="Pruijn G.J."/>
        </authorList>
    </citation>
    <scope>IDENTIFICATION IN THE RNA EXOSOME COMPLEX</scope>
    <scope>IDENTIFICATION BY MASS SPECTROMETRY</scope>
</reference>
<reference key="11">
    <citation type="journal article" date="2011" name="BMC Syst. Biol.">
        <title>Initial characterization of the human central proteome.</title>
        <authorList>
            <person name="Burkard T.R."/>
            <person name="Planyavsky M."/>
            <person name="Kaupe I."/>
            <person name="Breitwieser F.P."/>
            <person name="Buerckstuemmer T."/>
            <person name="Bennett K.L."/>
            <person name="Superti-Furga G."/>
            <person name="Colinge J."/>
        </authorList>
    </citation>
    <scope>IDENTIFICATION BY MASS SPECTROMETRY [LARGE SCALE ANALYSIS]</scope>
</reference>
<reference key="12">
    <citation type="journal article" date="2012" name="Proc. Natl. Acad. Sci. U.S.A.">
        <title>N-terminal acetylome analyses and functional insights of the N-terminal acetyltransferase NatB.</title>
        <authorList>
            <person name="Van Damme P."/>
            <person name="Lasa M."/>
            <person name="Polevoda B."/>
            <person name="Gazquez C."/>
            <person name="Elosegui-Artola A."/>
            <person name="Kim D.S."/>
            <person name="De Juan-Pardo E."/>
            <person name="Demeyer K."/>
            <person name="Hole K."/>
            <person name="Larrea E."/>
            <person name="Timmerman E."/>
            <person name="Prieto J."/>
            <person name="Arnesen T."/>
            <person name="Sherman F."/>
            <person name="Gevaert K."/>
            <person name="Aldabe R."/>
        </authorList>
    </citation>
    <scope>ACETYLATION [LARGE SCALE ANALYSIS] AT ALA-2</scope>
    <scope>CLEAVAGE OF INITIATOR METHIONINE [LARGE SCALE ANALYSIS]</scope>
    <scope>IDENTIFICATION BY MASS SPECTROMETRY [LARGE SCALE ANALYSIS]</scope>
</reference>
<reference key="13">
    <citation type="journal article" date="2014" name="Nat. Commun.">
        <title>EXOSC8 mutations alter mRNA metabolism and cause hypomyelination with spinal muscular atrophy and cerebellar hypoplasia.</title>
        <authorList>
            <person name="Boczonadi V."/>
            <person name="Muller J.S."/>
            <person name="Pyle A."/>
            <person name="Munkley J."/>
            <person name="Dor T."/>
            <person name="Quartararo J."/>
            <person name="Ferrero I."/>
            <person name="Karcagi V."/>
            <person name="Giunta M."/>
            <person name="Polvikoski T."/>
            <person name="Birchall D."/>
            <person name="Princzinger A."/>
            <person name="Cinnamon Y."/>
            <person name="Lutzkendorf S."/>
            <person name="Piko H."/>
            <person name="Reza M."/>
            <person name="Florez L."/>
            <person name="Santibanez-Koref M."/>
            <person name="Griffin H."/>
            <person name="Schuelke M."/>
            <person name="Elpeleg O."/>
            <person name="Kalaydjieva L."/>
            <person name="Lochmuller H."/>
            <person name="Elliott D.J."/>
            <person name="Chinnery P.F."/>
            <person name="Edvardson S."/>
            <person name="Horvath R."/>
        </authorList>
    </citation>
    <scope>INVOLVEMENT IN PCH1C</scope>
    <scope>VARIANTS PCH1C VAL-2 AND THR-272</scope>
</reference>
<reference evidence="11" key="14">
    <citation type="journal article" date="2006" name="Cell">
        <title>Reconstitution, activities, and structure of the eukaryotic RNA exosome.</title>
        <authorList>
            <person name="Liu Q."/>
            <person name="Greimann J.C."/>
            <person name="Lima C.D."/>
        </authorList>
    </citation>
    <scope>X-RAY CRYSTALLOGRAPHY (3.35 ANGSTROMS)</scope>
    <scope>LACK OF CATALYTIC ACTIVITY</scope>
    <scope>RECONSTITUTION OF THE RNA EXOSOME CORE COMPLEX</scope>
</reference>
<reference key="15">
    <citation type="journal article" date="2007" name="Cell">
        <authorList>
            <person name="Liu Q."/>
            <person name="Greimann J.C."/>
            <person name="Lima C.D."/>
        </authorList>
    </citation>
    <scope>ERRATUM OF PUBMED:17174896</scope>
</reference>
<reference evidence="12 13" key="16">
    <citation type="journal article" date="2018" name="Cell">
        <title>Helicase-Dependent RNA Decay Illuminated by a Cryo-EM Structure of a Human Nuclear RNA Exosome-MTR4 Complex.</title>
        <authorList>
            <person name="Weick E.M."/>
            <person name="Puno M.R."/>
            <person name="Januszyk K."/>
            <person name="Zinder J.C."/>
            <person name="DiMattia M.A."/>
            <person name="Lima C.D."/>
        </authorList>
    </citation>
    <scope>STRUCTURE BY ELECTRON MICROSCOPY (3.45 ANGSTROMS)</scope>
    <scope>SUBUNIT</scope>
</reference>
<reference evidence="14" key="17">
    <citation type="journal article" date="2018" name="Elife">
        <title>Distinct and evolutionary conserved structural features of the human nuclear exosome complex.</title>
        <authorList>
            <person name="Gerlach P."/>
            <person name="Schuller J.M."/>
            <person name="Bonneau F."/>
            <person name="Basquin J."/>
            <person name="Reichelt P."/>
            <person name="Falk S."/>
            <person name="Conti E."/>
        </authorList>
    </citation>
    <scope>STRUCTURE BY ELECTRON MICROSCOPY (3.80 ANGSTROMS) OF THE RNA EXOSOME COMPLEX IN COMPLEX WITH MPP6</scope>
    <scope>SUBUNIT</scope>
</reference>
<dbReference type="EMBL" id="AL138706">
    <property type="status" value="NOT_ANNOTATED_CDS"/>
    <property type="molecule type" value="Genomic_DNA"/>
</dbReference>
<dbReference type="EMBL" id="CH471075">
    <property type="protein sequence ID" value="EAX08581.1"/>
    <property type="status" value="ALT_SEQ"/>
    <property type="molecule type" value="Genomic_DNA"/>
</dbReference>
<dbReference type="EMBL" id="BC020773">
    <property type="protein sequence ID" value="AAH20773.1"/>
    <property type="molecule type" value="mRNA"/>
</dbReference>
<dbReference type="EMBL" id="AF025438">
    <property type="protein sequence ID" value="AAC39558.1"/>
    <property type="molecule type" value="mRNA"/>
</dbReference>
<dbReference type="CCDS" id="CCDS31958.1"/>
<dbReference type="RefSeq" id="NP_852480.1">
    <property type="nucleotide sequence ID" value="NM_181503.3"/>
</dbReference>
<dbReference type="PDB" id="2NN6">
    <property type="method" value="X-ray"/>
    <property type="resolution" value="3.35 A"/>
    <property type="chains" value="C=1-276"/>
</dbReference>
<dbReference type="PDB" id="6D6Q">
    <property type="method" value="EM"/>
    <property type="resolution" value="3.45 A"/>
    <property type="chains" value="C=1-276"/>
</dbReference>
<dbReference type="PDB" id="6D6R">
    <property type="method" value="EM"/>
    <property type="resolution" value="3.45 A"/>
    <property type="chains" value="C=1-276"/>
</dbReference>
<dbReference type="PDB" id="6H25">
    <property type="method" value="EM"/>
    <property type="resolution" value="3.80 A"/>
    <property type="chains" value="C=1-276"/>
</dbReference>
<dbReference type="PDB" id="9G8M">
    <property type="method" value="EM"/>
    <property type="resolution" value="3.30 A"/>
    <property type="chains" value="N=1-276"/>
</dbReference>
<dbReference type="PDB" id="9G8N">
    <property type="method" value="EM"/>
    <property type="resolution" value="3.70 A"/>
    <property type="chains" value="N=1-276"/>
</dbReference>
<dbReference type="PDB" id="9G8O">
    <property type="method" value="EM"/>
    <property type="resolution" value="3.40 A"/>
    <property type="chains" value="L=1-276"/>
</dbReference>
<dbReference type="PDB" id="9G8P">
    <property type="method" value="EM"/>
    <property type="resolution" value="7.00 A"/>
    <property type="chains" value="N=1-276"/>
</dbReference>
<dbReference type="PDBsum" id="2NN6"/>
<dbReference type="PDBsum" id="6D6Q"/>
<dbReference type="PDBsum" id="6D6R"/>
<dbReference type="PDBsum" id="6H25"/>
<dbReference type="PDBsum" id="9G8M"/>
<dbReference type="PDBsum" id="9G8N"/>
<dbReference type="PDBsum" id="9G8O"/>
<dbReference type="PDBsum" id="9G8P"/>
<dbReference type="EMDB" id="EMD-0127"/>
<dbReference type="EMDB" id="EMD-0128"/>
<dbReference type="EMDB" id="EMD-51132"/>
<dbReference type="EMDB" id="EMD-51133"/>
<dbReference type="EMDB" id="EMD-51134"/>
<dbReference type="EMDB" id="EMD-51135"/>
<dbReference type="EMDB" id="EMD-7808"/>
<dbReference type="EMDB" id="EMD-7809"/>
<dbReference type="SMR" id="Q96B26"/>
<dbReference type="BioGRID" id="116468">
    <property type="interactions" value="211"/>
</dbReference>
<dbReference type="ComplexPortal" id="CPX-476">
    <property type="entry name" value="Nuclear exosome complex, DIS3-EXOSC10 variant"/>
</dbReference>
<dbReference type="ComplexPortal" id="CPX-591">
    <property type="entry name" value="Nucleolar exosome complex, EXOSC10 variant"/>
</dbReference>
<dbReference type="ComplexPortal" id="CPX-592">
    <property type="entry name" value="Cytoplasmic exosome complex, DIS3L variant"/>
</dbReference>
<dbReference type="ComplexPortal" id="CPX-593">
    <property type="entry name" value="Exosome complex, DIS3 variant"/>
</dbReference>
<dbReference type="ComplexPortal" id="CPX-600">
    <property type="entry name" value="Cytoplasmic exosome complex, DIS3L-EXOSC10 variant"/>
</dbReference>
<dbReference type="CORUM" id="Q96B26"/>
<dbReference type="DIP" id="DIP-31133N"/>
<dbReference type="FunCoup" id="Q96B26">
    <property type="interactions" value="3133"/>
</dbReference>
<dbReference type="IntAct" id="Q96B26">
    <property type="interactions" value="112"/>
</dbReference>
<dbReference type="MINT" id="Q96B26"/>
<dbReference type="STRING" id="9606.ENSP00000374354"/>
<dbReference type="GlyGen" id="Q96B26">
    <property type="glycosylation" value="2 sites, 1 N-linked glycan (1 site), 1 O-linked glycan (1 site)"/>
</dbReference>
<dbReference type="iPTMnet" id="Q96B26"/>
<dbReference type="PhosphoSitePlus" id="Q96B26"/>
<dbReference type="SwissPalm" id="Q96B26"/>
<dbReference type="BioMuta" id="EXOSC8"/>
<dbReference type="DMDM" id="21759409"/>
<dbReference type="jPOST" id="Q96B26"/>
<dbReference type="MassIVE" id="Q96B26"/>
<dbReference type="PaxDb" id="9606-ENSP00000374354"/>
<dbReference type="PeptideAtlas" id="Q96B26"/>
<dbReference type="ProteomicsDB" id="76038"/>
<dbReference type="Pumba" id="Q96B26"/>
<dbReference type="TopDownProteomics" id="Q96B26"/>
<dbReference type="Antibodypedia" id="23142">
    <property type="antibodies" value="143 antibodies from 28 providers"/>
</dbReference>
<dbReference type="DNASU" id="11340"/>
<dbReference type="Ensembl" id="ENST00000389704.4">
    <property type="protein sequence ID" value="ENSP00000374354.3"/>
    <property type="gene ID" value="ENSG00000120699.14"/>
</dbReference>
<dbReference type="GeneID" id="11340"/>
<dbReference type="KEGG" id="hsa:11340"/>
<dbReference type="MANE-Select" id="ENST00000389704.4">
    <property type="protein sequence ID" value="ENSP00000374354.3"/>
    <property type="RefSeq nucleotide sequence ID" value="NM_181503.3"/>
    <property type="RefSeq protein sequence ID" value="NP_852480.1"/>
</dbReference>
<dbReference type="UCSC" id="uc001uwa.5">
    <property type="organism name" value="human"/>
</dbReference>
<dbReference type="AGR" id="HGNC:17035"/>
<dbReference type="CTD" id="11340"/>
<dbReference type="DisGeNET" id="11340"/>
<dbReference type="GeneCards" id="EXOSC8"/>
<dbReference type="HGNC" id="HGNC:17035">
    <property type="gene designation" value="EXOSC8"/>
</dbReference>
<dbReference type="HPA" id="ENSG00000120699">
    <property type="expression patterns" value="Low tissue specificity"/>
</dbReference>
<dbReference type="MalaCards" id="EXOSC8"/>
<dbReference type="MIM" id="606019">
    <property type="type" value="gene"/>
</dbReference>
<dbReference type="MIM" id="616081">
    <property type="type" value="phenotype"/>
</dbReference>
<dbReference type="neXtProt" id="NX_Q96B26"/>
<dbReference type="OpenTargets" id="ENSG00000120699"/>
<dbReference type="Orphanet" id="2254">
    <property type="disease" value="Pontocerebellar hypoplasia type 1"/>
</dbReference>
<dbReference type="PharmGKB" id="PA134922251"/>
<dbReference type="VEuPathDB" id="HostDB:ENSG00000120699"/>
<dbReference type="eggNOG" id="KOG1613">
    <property type="taxonomic scope" value="Eukaryota"/>
</dbReference>
<dbReference type="GeneTree" id="ENSGT00950000183130"/>
<dbReference type="HOGENOM" id="CLU_038194_3_1_1"/>
<dbReference type="InParanoid" id="Q96B26"/>
<dbReference type="OMA" id="EIKAFWV"/>
<dbReference type="OrthoDB" id="45882at2759"/>
<dbReference type="PAN-GO" id="Q96B26">
    <property type="GO annotations" value="12 GO annotations based on evolutionary models"/>
</dbReference>
<dbReference type="PhylomeDB" id="Q96B26"/>
<dbReference type="TreeFam" id="TF320415"/>
<dbReference type="PathwayCommons" id="Q96B26"/>
<dbReference type="Reactome" id="R-HSA-380994">
    <property type="pathway name" value="ATF4 activates genes in response to endoplasmic reticulum stress"/>
</dbReference>
<dbReference type="Reactome" id="R-HSA-429958">
    <property type="pathway name" value="mRNA decay by 3' to 5' exoribonuclease"/>
</dbReference>
<dbReference type="Reactome" id="R-HSA-450385">
    <property type="pathway name" value="Butyrate Response Factor 1 (BRF1) binds and destabilizes mRNA"/>
</dbReference>
<dbReference type="Reactome" id="R-HSA-450513">
    <property type="pathway name" value="Tristetraprolin (TTP, ZFP36) binds and destabilizes mRNA"/>
</dbReference>
<dbReference type="Reactome" id="R-HSA-450604">
    <property type="pathway name" value="KSRP (KHSRP) binds and destabilizes mRNA"/>
</dbReference>
<dbReference type="Reactome" id="R-HSA-6791226">
    <property type="pathway name" value="Major pathway of rRNA processing in the nucleolus and cytosol"/>
</dbReference>
<dbReference type="SignaLink" id="Q96B26"/>
<dbReference type="SIGNOR" id="Q96B26"/>
<dbReference type="BioGRID-ORCS" id="11340">
    <property type="hits" value="744 hits in 1184 CRISPR screens"/>
</dbReference>
<dbReference type="CD-CODE" id="91857CE7">
    <property type="entry name" value="Nucleolus"/>
</dbReference>
<dbReference type="EvolutionaryTrace" id="Q96B26"/>
<dbReference type="GeneWiki" id="Exosome_component_8"/>
<dbReference type="GenomeRNAi" id="11340"/>
<dbReference type="Pharos" id="Q96B26">
    <property type="development level" value="Tbio"/>
</dbReference>
<dbReference type="PRO" id="PR:Q96B26"/>
<dbReference type="Proteomes" id="UP000005640">
    <property type="component" value="Chromosome 13"/>
</dbReference>
<dbReference type="RNAct" id="Q96B26">
    <property type="molecule type" value="protein"/>
</dbReference>
<dbReference type="Bgee" id="ENSG00000120699">
    <property type="expression patterns" value="Expressed in ventricular zone and 209 other cell types or tissues"/>
</dbReference>
<dbReference type="ExpressionAtlas" id="Q96B26">
    <property type="expression patterns" value="baseline and differential"/>
</dbReference>
<dbReference type="GO" id="GO:0005694">
    <property type="term" value="C:chromosome"/>
    <property type="evidence" value="ECO:0000314"/>
    <property type="project" value="HPA"/>
</dbReference>
<dbReference type="GO" id="GO:0005737">
    <property type="term" value="C:cytoplasm"/>
    <property type="evidence" value="ECO:0000314"/>
    <property type="project" value="UniProtKB"/>
</dbReference>
<dbReference type="GO" id="GO:0000177">
    <property type="term" value="C:cytoplasmic exosome (RNase complex)"/>
    <property type="evidence" value="ECO:0000318"/>
    <property type="project" value="GO_Central"/>
</dbReference>
<dbReference type="GO" id="GO:0005829">
    <property type="term" value="C:cytosol"/>
    <property type="evidence" value="ECO:0000314"/>
    <property type="project" value="HPA"/>
</dbReference>
<dbReference type="GO" id="GO:0000178">
    <property type="term" value="C:exosome (RNase complex)"/>
    <property type="evidence" value="ECO:0000314"/>
    <property type="project" value="UniProtKB"/>
</dbReference>
<dbReference type="GO" id="GO:0001650">
    <property type="term" value="C:fibrillar center"/>
    <property type="evidence" value="ECO:0000314"/>
    <property type="project" value="HPA"/>
</dbReference>
<dbReference type="GO" id="GO:0043231">
    <property type="term" value="C:intracellular membrane-bounded organelle"/>
    <property type="evidence" value="ECO:0000314"/>
    <property type="project" value="HPA"/>
</dbReference>
<dbReference type="GO" id="GO:0000176">
    <property type="term" value="C:nuclear exosome (RNase complex)"/>
    <property type="evidence" value="ECO:0000318"/>
    <property type="project" value="GO_Central"/>
</dbReference>
<dbReference type="GO" id="GO:0101019">
    <property type="term" value="C:nucleolar exosome (RNase complex)"/>
    <property type="evidence" value="ECO:0000303"/>
    <property type="project" value="ComplexPortal"/>
</dbReference>
<dbReference type="GO" id="GO:0005730">
    <property type="term" value="C:nucleolus"/>
    <property type="evidence" value="ECO:0000314"/>
    <property type="project" value="ComplexPortal"/>
</dbReference>
<dbReference type="GO" id="GO:0005654">
    <property type="term" value="C:nucleoplasm"/>
    <property type="evidence" value="ECO:0000314"/>
    <property type="project" value="HPA"/>
</dbReference>
<dbReference type="GO" id="GO:0005634">
    <property type="term" value="C:nucleus"/>
    <property type="evidence" value="ECO:0000314"/>
    <property type="project" value="UniProtKB"/>
</dbReference>
<dbReference type="GO" id="GO:0042802">
    <property type="term" value="F:identical protein binding"/>
    <property type="evidence" value="ECO:0000353"/>
    <property type="project" value="IntAct"/>
</dbReference>
<dbReference type="GO" id="GO:0035925">
    <property type="term" value="F:mRNA 3'-UTR AU-rich region binding"/>
    <property type="evidence" value="ECO:0000314"/>
    <property type="project" value="GO_Central"/>
</dbReference>
<dbReference type="GO" id="GO:0000467">
    <property type="term" value="P:exonucleolytic trimming to generate mature 3'-end of 5.8S rRNA from tricistronic rRNA transcript (SSU-rRNA, 5.8S rRNA, LSU-rRNA)"/>
    <property type="evidence" value="ECO:0000318"/>
    <property type="project" value="GO_Central"/>
</dbReference>
<dbReference type="GO" id="GO:0071028">
    <property type="term" value="P:nuclear mRNA surveillance"/>
    <property type="evidence" value="ECO:0000318"/>
    <property type="project" value="GO_Central"/>
</dbReference>
<dbReference type="GO" id="GO:0071035">
    <property type="term" value="P:nuclear polyadenylation-dependent rRNA catabolic process"/>
    <property type="evidence" value="ECO:0000318"/>
    <property type="project" value="GO_Central"/>
</dbReference>
<dbReference type="GO" id="GO:0006401">
    <property type="term" value="P:RNA catabolic process"/>
    <property type="evidence" value="ECO:0000314"/>
    <property type="project" value="ComplexPortal"/>
</dbReference>
<dbReference type="GO" id="GO:0006396">
    <property type="term" value="P:RNA processing"/>
    <property type="evidence" value="ECO:0000314"/>
    <property type="project" value="ComplexPortal"/>
</dbReference>
<dbReference type="GO" id="GO:0016075">
    <property type="term" value="P:rRNA catabolic process"/>
    <property type="evidence" value="ECO:0000318"/>
    <property type="project" value="GO_Central"/>
</dbReference>
<dbReference type="GO" id="GO:0071038">
    <property type="term" value="P:TRAMP-dependent tRNA surveillance pathway"/>
    <property type="evidence" value="ECO:0000318"/>
    <property type="project" value="GO_Central"/>
</dbReference>
<dbReference type="GO" id="GO:0034473">
    <property type="term" value="P:U1 snRNA 3'-end processing"/>
    <property type="evidence" value="ECO:0000318"/>
    <property type="project" value="GO_Central"/>
</dbReference>
<dbReference type="GO" id="GO:0034475">
    <property type="term" value="P:U4 snRNA 3'-end processing"/>
    <property type="evidence" value="ECO:0000318"/>
    <property type="project" value="GO_Central"/>
</dbReference>
<dbReference type="GO" id="GO:0034476">
    <property type="term" value="P:U5 snRNA 3'-end processing"/>
    <property type="evidence" value="ECO:0000318"/>
    <property type="project" value="GO_Central"/>
</dbReference>
<dbReference type="CDD" id="cd11369">
    <property type="entry name" value="RNase_PH_RRP43"/>
    <property type="match status" value="1"/>
</dbReference>
<dbReference type="FunFam" id="3.30.230.70:FF:000011">
    <property type="entry name" value="exosome complex component RRP43"/>
    <property type="match status" value="1"/>
</dbReference>
<dbReference type="Gene3D" id="3.30.230.70">
    <property type="entry name" value="GHMP Kinase, N-terminal domain"/>
    <property type="match status" value="1"/>
</dbReference>
<dbReference type="InterPro" id="IPR001247">
    <property type="entry name" value="ExoRNase_PH_dom1"/>
</dbReference>
<dbReference type="InterPro" id="IPR015847">
    <property type="entry name" value="ExoRNase_PH_dom2"/>
</dbReference>
<dbReference type="InterPro" id="IPR036345">
    <property type="entry name" value="ExoRNase_PH_dom2_sf"/>
</dbReference>
<dbReference type="InterPro" id="IPR050590">
    <property type="entry name" value="Exosome_comp_Rrp42_subfam"/>
</dbReference>
<dbReference type="InterPro" id="IPR027408">
    <property type="entry name" value="PNPase/RNase_PH_dom_sf"/>
</dbReference>
<dbReference type="InterPro" id="IPR020568">
    <property type="entry name" value="Ribosomal_Su5_D2-typ_SF"/>
</dbReference>
<dbReference type="InterPro" id="IPR033196">
    <property type="entry name" value="Rrp43"/>
</dbReference>
<dbReference type="PANTHER" id="PTHR11097:SF9">
    <property type="entry name" value="EXOSOME COMPLEX COMPONENT RRP43"/>
    <property type="match status" value="1"/>
</dbReference>
<dbReference type="PANTHER" id="PTHR11097">
    <property type="entry name" value="EXOSOME COMPLEX EXONUCLEASE RIBOSOMAL RNA PROCESSING PROTEIN"/>
    <property type="match status" value="1"/>
</dbReference>
<dbReference type="Pfam" id="PF01138">
    <property type="entry name" value="RNase_PH"/>
    <property type="match status" value="1"/>
</dbReference>
<dbReference type="Pfam" id="PF03725">
    <property type="entry name" value="RNase_PH_C"/>
    <property type="match status" value="1"/>
</dbReference>
<dbReference type="SUPFAM" id="SSF55666">
    <property type="entry name" value="Ribonuclease PH domain 2-like"/>
    <property type="match status" value="1"/>
</dbReference>
<dbReference type="SUPFAM" id="SSF54211">
    <property type="entry name" value="Ribosomal protein S5 domain 2-like"/>
    <property type="match status" value="1"/>
</dbReference>
<organism>
    <name type="scientific">Homo sapiens</name>
    <name type="common">Human</name>
    <dbReference type="NCBI Taxonomy" id="9606"/>
    <lineage>
        <taxon>Eukaryota</taxon>
        <taxon>Metazoa</taxon>
        <taxon>Chordata</taxon>
        <taxon>Craniata</taxon>
        <taxon>Vertebrata</taxon>
        <taxon>Euteleostomi</taxon>
        <taxon>Mammalia</taxon>
        <taxon>Eutheria</taxon>
        <taxon>Euarchontoglires</taxon>
        <taxon>Primates</taxon>
        <taxon>Haplorrhini</taxon>
        <taxon>Catarrhini</taxon>
        <taxon>Hominidae</taxon>
        <taxon>Homo</taxon>
    </lineage>
</organism>
<name>EXOS8_HUMAN</name>
<comment type="function">
    <text evidence="3 4">Non-catalytic component of the RNA exosome complex which has 3'-&gt;5' exoribonuclease activity and participates in a multitude of cellular RNA processing and degradation events. In the nucleus, the RNA exosome complex is involved in proper maturation of stable RNA species such as rRNA, snRNA and snoRNA, in the elimination of RNA processing by-products and non-coding 'pervasive' transcripts, such as antisense RNA species and promoter-upstream transcripts (PROMPTs), and of mRNAs with processing defects, thereby limiting or excluding their export to the cytoplasm. The RNA exosome may be involved in Ig class switch recombination (CSR) and/or Ig variable region somatic hypermutation (SHM) by targeting AICDA deamination activity to transcribed dsDNA substrates. In the cytoplasm, the RNA exosome complex is involved in general mRNA turnover and specifically degrades inherently unstable mRNAs containing AU-rich elements (AREs) within their 3' untranslated regions, and in RNA surveillance pathways, preventing translation of aberrant mRNAs. It seems to be involved in degradation of histone mRNA. The catalytic inactive RNA exosome core complex of 9 subunits (Exo-9) is proposed to play a pivotal role in the binding and presentation of RNA for ribonucleolysis, and to serve as a scaffold for the association with catalytic subunits and accessory proteins or complexes. EXOSC8 binds to ARE-containing RNAs.</text>
</comment>
<comment type="subunit">
    <text evidence="2 5 7 8 9">Component of the RNA exosome core complex (Exo-9), composed of EXOSC1, EXOSC2, EXOSC3, EXOSC4, EXOSC5, EXOSC6, EXOSC7, EXOSC8 and EXOSC9; within the complex interacts with EXOSC5 and EXOSC6 (PubMed:29906447, PubMed:30047866). The catalytically inactive RNA exosome core complex (Exo-9) associates with the catalytic subunit EXOSC10/RRP6 (PubMed:11719186, PubMed:20531389, PubMed:29906447). Exo-9 may associate with DIS3 to form the nucleolar exosome complex, or DIS3L to form the cytoplasmic exosome complex (PubMed:11719186, PubMed:20531389, PubMed:29906447). Exo-9 is formed by a hexameric base ring consisting of the heterodimers EXOSC4-EXOSC9, EXOSC5-EXOSC8 and EXOSC6-EXOSC7, and a cap ring consisting of EXOSC1, EXOSC2 and EXOSC3 (PubMed:11719186, PubMed:20531389, PubMed:30047866). The RNA exosome complex associates with cofactors C1D/RRP47, MPHOSPH6/MPP6 and MTREX/MTR4 (PubMed:30047866). Binds outer membrane protein opap from Neisseria gonorrhoeae (PubMed:9466265).</text>
</comment>
<comment type="interaction">
    <interactant intactId="EBI-371922">
        <id>Q96B26</id>
    </interactant>
    <interactant intactId="EBI-8637627">
        <id>Q8WTP8</id>
        <label>AEN</label>
    </interactant>
    <organismsDiffer>false</organismsDiffer>
    <experiments>3</experiments>
</comment>
<comment type="interaction">
    <interactant intactId="EBI-371922">
        <id>Q96B26</id>
    </interactant>
    <interactant intactId="EBI-1170906">
        <id>P15336</id>
        <label>ATF2</label>
    </interactant>
    <organismsDiffer>false</organismsDiffer>
    <experiments>3</experiments>
</comment>
<comment type="interaction">
    <interactant intactId="EBI-371922">
        <id>Q96B26</id>
    </interactant>
    <interactant intactId="EBI-7317823">
        <id>Q6P5X5</id>
        <label>C22orf39</label>
    </interactant>
    <organismsDiffer>false</organismsDiffer>
    <experiments>3</experiments>
</comment>
<comment type="interaction">
    <interactant intactId="EBI-371922">
        <id>Q96B26</id>
    </interactant>
    <interactant intactId="EBI-741032">
        <id>Q8NE01</id>
        <label>CNNM3</label>
    </interactant>
    <organismsDiffer>false</organismsDiffer>
    <experiments>3</experiments>
</comment>
<comment type="interaction">
    <interactant intactId="EBI-371922">
        <id>Q96B26</id>
    </interactant>
    <interactant intactId="EBI-373279">
        <id>Q86Y22</id>
        <label>COL23A1</label>
    </interactant>
    <organismsDiffer>false</organismsDiffer>
    <experiments>3</experiments>
</comment>
<comment type="interaction">
    <interactant intactId="EBI-371922">
        <id>Q96B26</id>
    </interactant>
    <interactant intactId="EBI-715032">
        <id>P20674</id>
        <label>COX5A</label>
    </interactant>
    <organismsDiffer>false</organismsDiffer>
    <experiments>3</experiments>
</comment>
<comment type="interaction">
    <interactant intactId="EBI-371922">
        <id>Q96B26</id>
    </interactant>
    <interactant intactId="EBI-742054">
        <id>Q96D03</id>
        <label>DDIT4L</label>
    </interactant>
    <organismsDiffer>false</organismsDiffer>
    <experiments>3</experiments>
</comment>
<comment type="interaction">
    <interactant intactId="EBI-371922">
        <id>Q96B26</id>
    </interactant>
    <interactant intactId="EBI-724940">
        <id>Q9BVJ7</id>
        <label>DUSP23</label>
    </interactant>
    <organismsDiffer>false</organismsDiffer>
    <experiments>12</experiments>
</comment>
<comment type="interaction">
    <interactant intactId="EBI-371922">
        <id>Q96B26</id>
    </interactant>
    <interactant intactId="EBI-371892">
        <id>Q9Y3B2</id>
        <label>EXOSC1</label>
    </interactant>
    <organismsDiffer>false</organismsDiffer>
    <experiments>10</experiments>
</comment>
<comment type="interaction">
    <interactant intactId="EBI-371922">
        <id>Q96B26</id>
    </interactant>
    <interactant intactId="EBI-358236">
        <id>Q01780</id>
        <label>EXOSC10</label>
    </interactant>
    <organismsDiffer>false</organismsDiffer>
    <experiments>3</experiments>
</comment>
<comment type="interaction">
    <interactant intactId="EBI-371922">
        <id>Q96B26</id>
    </interactant>
    <interactant intactId="EBI-371866">
        <id>Q9NQT5</id>
        <label>EXOSC3</label>
    </interactant>
    <organismsDiffer>false</organismsDiffer>
    <experiments>7</experiments>
</comment>
<comment type="interaction">
    <interactant intactId="EBI-371922">
        <id>Q96B26</id>
    </interactant>
    <interactant intactId="EBI-371876">
        <id>Q9NQT4</id>
        <label>EXOSC5</label>
    </interactant>
    <organismsDiffer>false</organismsDiffer>
    <experiments>25</experiments>
</comment>
<comment type="interaction">
    <interactant intactId="EBI-371922">
        <id>Q96B26</id>
    </interactant>
    <interactant intactId="EBI-371922">
        <id>Q96B26</id>
        <label>EXOSC8</label>
    </interactant>
    <organismsDiffer>false</organismsDiffer>
    <experiments>5</experiments>
</comment>
<comment type="interaction">
    <interactant intactId="EBI-371922">
        <id>Q96B26</id>
    </interactant>
    <interactant intactId="EBI-7225287">
        <id>Q96MY7</id>
        <label>FAM161B</label>
    </interactant>
    <organismsDiffer>false</organismsDiffer>
    <experiments>3</experiments>
</comment>
<comment type="interaction">
    <interactant intactId="EBI-371922">
        <id>Q96B26</id>
    </interactant>
    <interactant intactId="EBI-6658203">
        <id>Q86YD7</id>
        <label>FAM90A1</label>
    </interactant>
    <organismsDiffer>false</organismsDiffer>
    <experiments>6</experiments>
</comment>
<comment type="interaction">
    <interactant intactId="EBI-371922">
        <id>Q96B26</id>
    </interactant>
    <interactant intactId="EBI-11320806">
        <id>Q9NU39</id>
        <label>FOXD4L1</label>
    </interactant>
    <organismsDiffer>false</organismsDiffer>
    <experiments>3</experiments>
</comment>
<comment type="interaction">
    <interactant intactId="EBI-371922">
        <id>Q96B26</id>
    </interactant>
    <interactant intactId="EBI-2515248">
        <id>Q14331</id>
        <label>FRG1</label>
    </interactant>
    <organismsDiffer>false</organismsDiffer>
    <experiments>3</experiments>
</comment>
<comment type="interaction">
    <interactant intactId="EBI-371922">
        <id>Q96B26</id>
    </interactant>
    <interactant intactId="EBI-744104">
        <id>P55040</id>
        <label>GEM</label>
    </interactant>
    <organismsDiffer>false</organismsDiffer>
    <experiments>3</experiments>
</comment>
<comment type="interaction">
    <interactant intactId="EBI-371922">
        <id>Q96B26</id>
    </interactant>
    <interactant intactId="EBI-11956675">
        <id>Q9GZV7</id>
        <label>HAPLN2</label>
    </interactant>
    <organismsDiffer>false</organismsDiffer>
    <experiments>3</experiments>
</comment>
<comment type="interaction">
    <interactant intactId="EBI-371922">
        <id>Q96B26</id>
    </interactant>
    <interactant intactId="EBI-745290">
        <id>P17482</id>
        <label>HOXB9</label>
    </interactant>
    <organismsDiffer>false</organismsDiffer>
    <experiments>3</experiments>
</comment>
<comment type="interaction">
    <interactant intactId="EBI-371922">
        <id>Q96B26</id>
    </interactant>
    <interactant intactId="EBI-6509505">
        <id>Q0VD86</id>
        <label>INCA1</label>
    </interactant>
    <organismsDiffer>false</organismsDiffer>
    <experiments>3</experiments>
</comment>
<comment type="interaction">
    <interactant intactId="EBI-371922">
        <id>Q96B26</id>
    </interactant>
    <interactant intactId="EBI-2556193">
        <id>Q63ZY3</id>
        <label>KANK2</label>
    </interactant>
    <organismsDiffer>false</organismsDiffer>
    <experiments>3</experiments>
</comment>
<comment type="interaction">
    <interactant intactId="EBI-371922">
        <id>Q96B26</id>
    </interactant>
    <interactant intactId="EBI-2866553">
        <id>Q14654</id>
        <label>KCNJ11</label>
    </interactant>
    <organismsDiffer>false</organismsDiffer>
    <experiments>3</experiments>
</comment>
<comment type="interaction">
    <interactant intactId="EBI-371922">
        <id>Q96B26</id>
    </interactant>
    <interactant intactId="EBI-2798728">
        <id>P61968</id>
        <label>LMO4</label>
    </interactant>
    <organismsDiffer>false</organismsDiffer>
    <experiments>3</experiments>
</comment>
<comment type="interaction">
    <interactant intactId="EBI-371922">
        <id>Q96B26</id>
    </interactant>
    <interactant intactId="EBI-739832">
        <id>Q8TBB1</id>
        <label>LNX1</label>
    </interactant>
    <organismsDiffer>false</organismsDiffer>
    <experiments>6</experiments>
</comment>
<comment type="interaction">
    <interactant intactId="EBI-371922">
        <id>Q96B26</id>
    </interactant>
    <interactant intactId="EBI-372521">
        <id>Q9Y4Z0</id>
        <label>LSM4</label>
    </interactant>
    <organismsDiffer>false</organismsDiffer>
    <experiments>3</experiments>
</comment>
<comment type="interaction">
    <interactant intactId="EBI-371922">
        <id>Q96B26</id>
    </interactant>
    <interactant intactId="EBI-2350695">
        <id>Q96GV9</id>
        <label>MACIR</label>
    </interactant>
    <organismsDiffer>false</organismsDiffer>
    <experiments>3</experiments>
</comment>
<comment type="interaction">
    <interactant intactId="EBI-371922">
        <id>Q96B26</id>
    </interactant>
    <interactant intactId="EBI-10269566">
        <id>Q8NDC4</id>
        <label>MORN4</label>
    </interactant>
    <organismsDiffer>false</organismsDiffer>
    <experiments>3</experiments>
</comment>
<comment type="interaction">
    <interactant intactId="EBI-371922">
        <id>Q96B26</id>
    </interactant>
    <interactant intactId="EBI-10277137">
        <id>Q8WVZ3</id>
        <label>MORN4</label>
    </interactant>
    <organismsDiffer>false</organismsDiffer>
    <experiments>3</experiments>
</comment>
<comment type="interaction">
    <interactant intactId="EBI-371922">
        <id>Q96B26</id>
    </interactant>
    <interactant intactId="EBI-744402">
        <id>Q9NP98</id>
        <label>MYOZ1</label>
    </interactant>
    <organismsDiffer>false</organismsDiffer>
    <experiments>3</experiments>
</comment>
<comment type="interaction">
    <interactant intactId="EBI-371922">
        <id>Q96B26</id>
    </interactant>
    <interactant intactId="EBI-11746523">
        <id>Q14511-2</id>
        <label>NEDD9</label>
    </interactant>
    <organismsDiffer>false</organismsDiffer>
    <experiments>3</experiments>
</comment>
<comment type="interaction">
    <interactant intactId="EBI-371922">
        <id>Q96B26</id>
    </interactant>
    <interactant intactId="EBI-741158">
        <id>Q96HA8</id>
        <label>NTAQ1</label>
    </interactant>
    <organismsDiffer>false</organismsDiffer>
    <experiments>3</experiments>
</comment>
<comment type="interaction">
    <interactant intactId="EBI-371922">
        <id>Q96B26</id>
    </interactant>
    <interactant intactId="EBI-1054396">
        <id>Q01804</id>
        <label>OTUD4</label>
    </interactant>
    <organismsDiffer>false</organismsDiffer>
    <experiments>6</experiments>
</comment>
<comment type="interaction">
    <interactant intactId="EBI-371922">
        <id>Q96B26</id>
    </interactant>
    <interactant intactId="EBI-745085">
        <id>Q96BD5</id>
        <label>PHF21A</label>
    </interactant>
    <organismsDiffer>false</organismsDiffer>
    <experiments>3</experiments>
</comment>
<comment type="interaction">
    <interactant intactId="EBI-371922">
        <id>Q96B26</id>
    </interactant>
    <interactant intactId="EBI-348567">
        <id>O75928-2</id>
        <label>PIAS2</label>
    </interactant>
    <organismsDiffer>false</organismsDiffer>
    <experiments>3</experiments>
</comment>
<comment type="interaction">
    <interactant intactId="EBI-371922">
        <id>Q96B26</id>
    </interactant>
    <interactant intactId="EBI-10276663">
        <id>Q8WUT1</id>
        <label>POLDIP3</label>
    </interactant>
    <organismsDiffer>false</organismsDiffer>
    <experiments>3</experiments>
</comment>
<comment type="interaction">
    <interactant intactId="EBI-371922">
        <id>Q96B26</id>
    </interactant>
    <interactant intactId="EBI-740818">
        <id>Q9Y272</id>
        <label>RASD1</label>
    </interactant>
    <organismsDiffer>false</organismsDiffer>
    <experiments>3</experiments>
</comment>
<comment type="interaction">
    <interactant intactId="EBI-371922">
        <id>Q96B26</id>
    </interactant>
    <interactant intactId="EBI-307352">
        <id>Q04864</id>
        <label>REL</label>
    </interactant>
    <organismsDiffer>false</organismsDiffer>
    <experiments>3</experiments>
</comment>
<comment type="interaction">
    <interactant intactId="EBI-371922">
        <id>Q96B26</id>
    </interactant>
    <interactant intactId="EBI-712376">
        <id>P40937</id>
        <label>RFC5</label>
    </interactant>
    <organismsDiffer>false</organismsDiffer>
    <experiments>3</experiments>
</comment>
<comment type="interaction">
    <interactant intactId="EBI-371922">
        <id>Q96B26</id>
    </interactant>
    <interactant intactId="EBI-366542">
        <id>O95059</id>
        <label>RPP14</label>
    </interactant>
    <organismsDiffer>false</organismsDiffer>
    <experiments>3</experiments>
</comment>
<comment type="interaction">
    <interactant intactId="EBI-371922">
        <id>Q96B26</id>
    </interactant>
    <interactant intactId="EBI-6257312">
        <id>Q9BVN2</id>
        <label>RUSC1</label>
    </interactant>
    <organismsDiffer>false</organismsDiffer>
    <experiments>6</experiments>
</comment>
<comment type="interaction">
    <interactant intactId="EBI-371922">
        <id>Q96B26</id>
    </interactant>
    <interactant intactId="EBI-16429492">
        <id>P28702-3</id>
        <label>RXRB</label>
    </interactant>
    <organismsDiffer>false</organismsDiffer>
    <experiments>3</experiments>
</comment>
<comment type="interaction">
    <interactant intactId="EBI-371922">
        <id>Q96B26</id>
    </interactant>
    <interactant intactId="EBI-10269374">
        <id>Q8ND83</id>
        <label>SLAIN1</label>
    </interactant>
    <organismsDiffer>false</organismsDiffer>
    <experiments>3</experiments>
</comment>
<comment type="interaction">
    <interactant intactId="EBI-371922">
        <id>Q96B26</id>
    </interactant>
    <interactant intactId="EBI-1045459">
        <id>O95863</id>
        <label>SNAI1</label>
    </interactant>
    <organismsDiffer>false</organismsDiffer>
    <experiments>3</experiments>
</comment>
<comment type="interaction">
    <interactant intactId="EBI-371922">
        <id>Q96B26</id>
    </interactant>
    <interactant intactId="EBI-372475">
        <id>P14678-2</id>
        <label>SNRPB</label>
    </interactant>
    <organismsDiffer>false</organismsDiffer>
    <experiments>3</experiments>
</comment>
<comment type="interaction">
    <interactant intactId="EBI-371922">
        <id>Q96B26</id>
    </interactant>
    <interactant intactId="EBI-766589">
        <id>P09234</id>
        <label>SNRPC</label>
    </interactant>
    <organismsDiffer>false</organismsDiffer>
    <experiments>3</experiments>
</comment>
<comment type="interaction">
    <interactant intactId="EBI-371922">
        <id>Q96B26</id>
    </interactant>
    <interactant intactId="EBI-10246938">
        <id>Q5TAL4</id>
        <label>SNRPC</label>
    </interactant>
    <organismsDiffer>false</organismsDiffer>
    <experiments>3</experiments>
</comment>
<comment type="interaction">
    <interactant intactId="EBI-371922">
        <id>Q96B26</id>
    </interactant>
    <interactant intactId="EBI-1539606">
        <id>O14512</id>
        <label>SOCS7</label>
    </interactant>
    <organismsDiffer>false</organismsDiffer>
    <experiments>3</experiments>
</comment>
<comment type="interaction">
    <interactant intactId="EBI-371922">
        <id>Q96B26</id>
    </interactant>
    <interactant intactId="EBI-11995806">
        <id>Q9H0A9-2</id>
        <label>SPATC1L</label>
    </interactant>
    <organismsDiffer>false</organismsDiffer>
    <experiments>3</experiments>
</comment>
<comment type="interaction">
    <interactant intactId="EBI-371922">
        <id>Q96B26</id>
    </interactant>
    <interactant intactId="EBI-710310">
        <id>Q15560</id>
        <label>TCEA2</label>
    </interactant>
    <organismsDiffer>false</organismsDiffer>
    <experiments>3</experiments>
</comment>
<comment type="interaction">
    <interactant intactId="EBI-371922">
        <id>Q96B26</id>
    </interactant>
    <interactant intactId="EBI-10259904">
        <id>Q86VL0</id>
        <label>TCEA2</label>
    </interactant>
    <organismsDiffer>false</organismsDiffer>
    <experiments>3</experiments>
</comment>
<comment type="interaction">
    <interactant intactId="EBI-371922">
        <id>Q96B26</id>
    </interactant>
    <interactant intactId="EBI-2514218">
        <id>Q01664</id>
        <label>TFAP4</label>
    </interactant>
    <organismsDiffer>false</organismsDiffer>
    <experiments>6</experiments>
</comment>
<comment type="interaction">
    <interactant intactId="EBI-371922">
        <id>Q96B26</id>
    </interactant>
    <interactant intactId="EBI-1055906">
        <id>Q9BRA2</id>
        <label>TXNDC17</label>
    </interactant>
    <organismsDiffer>false</organismsDiffer>
    <experiments>6</experiments>
</comment>
<comment type="interaction">
    <interactant intactId="EBI-371922">
        <id>Q96B26</id>
    </interactant>
    <interactant intactId="EBI-707554">
        <id>O14530</id>
        <label>TXNDC9</label>
    </interactant>
    <organismsDiffer>false</organismsDiffer>
    <experiments>6</experiments>
</comment>
<comment type="interaction">
    <interactant intactId="EBI-371922">
        <id>Q96B26</id>
    </interactant>
    <interactant intactId="EBI-743272">
        <id>O75604</id>
        <label>USP2</label>
    </interactant>
    <organismsDiffer>false</organismsDiffer>
    <experiments>3</experiments>
</comment>
<comment type="subcellular location">
    <subcellularLocation>
        <location evidence="4">Cytoplasm</location>
    </subcellularLocation>
    <subcellularLocation>
        <location evidence="4">Nucleus</location>
    </subcellularLocation>
    <subcellularLocation>
        <location evidence="1">Nucleus</location>
        <location evidence="1">Nucleolus</location>
    </subcellularLocation>
</comment>
<comment type="disease" evidence="6">
    <disease id="DI-04273">
        <name>Pontocerebellar hypoplasia 1C</name>
        <acronym>PCH1C</acronym>
        <description>A severe autosomal recessive neurodegenerative disease characterized by cerebellar and corpus callosum hypoplasia, abnormal myelination of the central nervous system, and spinal motor neuron disease. Affected individuals manifest failure to thrive, severe muscle weakness, spasticity and psychomotor retardation. Vision and hearing are impaired.</description>
        <dbReference type="MIM" id="616081"/>
    </disease>
    <text evidence="6">The disease is caused by variants affecting the gene represented in this entry. EXOSC8 dysfunction causes myelin disruption through an imbalanced supply of myelin proteins due to dysregulation of their ARE-containing mRNAs (PubMed:24989451).</text>
</comment>
<comment type="similarity">
    <text evidence="10">Belongs to the RNase PH family.</text>
</comment>
<comment type="caution">
    <text evidence="10">The six exosome core subunits containing a RNase PH-domain are not phosphorolytically active.</text>
</comment>
<comment type="sequence caution" evidence="10">
    <conflict type="erroneous gene model prediction">
        <sequence resource="EMBL-CDS" id="EAX08581"/>
    </conflict>
</comment>
<feature type="initiator methionine" description="Removed" evidence="15">
    <location>
        <position position="1"/>
    </location>
</feature>
<feature type="chain" id="PRO_0000139967" description="Exosome complex component RRP43">
    <location>
        <begin position="2"/>
        <end position="276"/>
    </location>
</feature>
<feature type="modified residue" description="N-acetylalanine" evidence="15">
    <location>
        <position position="2"/>
    </location>
</feature>
<feature type="sequence variant" id="VAR_072558" description="In PCH1C; dbSNP:rs606231285." evidence="6">
    <original>A</original>
    <variation>V</variation>
    <location>
        <position position="2"/>
    </location>
</feature>
<feature type="sequence variant" id="VAR_072559" description="In PCH1C; dbSNP:rs36027220." evidence="6">
    <original>S</original>
    <variation>T</variation>
    <location>
        <position position="272"/>
    </location>
</feature>
<feature type="sequence conflict" description="In Ref. 4; AAC39558." evidence="10" ref="4">
    <original>LMDEVIKSMKPK</original>
    <variation>TDG</variation>
    <location>
        <begin position="265"/>
        <end position="276"/>
    </location>
</feature>
<feature type="helix" evidence="16">
    <location>
        <begin position="11"/>
        <end position="19"/>
    </location>
</feature>
<feature type="strand" evidence="16">
    <location>
        <begin position="37"/>
        <end position="39"/>
    </location>
</feature>
<feature type="strand" evidence="16">
    <location>
        <begin position="43"/>
        <end position="53"/>
    </location>
</feature>
<feature type="strand" evidence="16">
    <location>
        <begin position="56"/>
        <end position="66"/>
    </location>
</feature>
<feature type="strand" evidence="16">
    <location>
        <begin position="71"/>
        <end position="73"/>
    </location>
</feature>
<feature type="strand" evidence="16">
    <location>
        <begin position="80"/>
        <end position="84"/>
    </location>
</feature>
<feature type="strand" evidence="16">
    <location>
        <begin position="87"/>
        <end position="89"/>
    </location>
</feature>
<feature type="strand" evidence="16">
    <location>
        <begin position="95"/>
        <end position="97"/>
    </location>
</feature>
<feature type="helix" evidence="16">
    <location>
        <begin position="100"/>
        <end position="116"/>
    </location>
</feature>
<feature type="helix" evidence="16">
    <location>
        <begin position="121"/>
        <end position="124"/>
    </location>
</feature>
<feature type="strand" evidence="16">
    <location>
        <begin position="126"/>
        <end position="128"/>
    </location>
</feature>
<feature type="strand" evidence="16">
    <location>
        <begin position="133"/>
        <end position="143"/>
    </location>
</feature>
<feature type="helix" evidence="16">
    <location>
        <begin position="150"/>
        <end position="161"/>
    </location>
</feature>
<feature type="strand" evidence="17">
    <location>
        <begin position="164"/>
        <end position="171"/>
    </location>
</feature>
<feature type="strand" evidence="16">
    <location>
        <begin position="172"/>
        <end position="175"/>
    </location>
</feature>
<feature type="strand" evidence="17">
    <location>
        <begin position="176"/>
        <end position="186"/>
    </location>
</feature>
<feature type="strand" evidence="16">
    <location>
        <begin position="194"/>
        <end position="200"/>
    </location>
</feature>
<feature type="turn" evidence="16">
    <location>
        <begin position="202"/>
        <end position="204"/>
    </location>
</feature>
<feature type="strand" evidence="16">
    <location>
        <begin position="207"/>
        <end position="209"/>
    </location>
</feature>
<feature type="turn" evidence="16">
    <location>
        <begin position="212"/>
        <end position="216"/>
    </location>
</feature>
<feature type="strand" evidence="16">
    <location>
        <begin position="219"/>
        <end position="226"/>
    </location>
</feature>
<feature type="turn" evidence="17">
    <location>
        <begin position="228"/>
        <end position="230"/>
    </location>
</feature>
<feature type="strand" evidence="16">
    <location>
        <begin position="232"/>
        <end position="238"/>
    </location>
</feature>
<feature type="helix" evidence="16">
    <location>
        <begin position="245"/>
        <end position="267"/>
    </location>
</feature>
<feature type="turn" evidence="16">
    <location>
        <begin position="268"/>
        <end position="273"/>
    </location>
</feature>
<gene>
    <name type="primary">EXOSC8</name>
    <name type="synonym">OIP2</name>
    <name type="synonym">RRP43</name>
</gene>
<protein>
    <recommendedName>
        <fullName>Exosome complex component RRP43</fullName>
    </recommendedName>
    <alternativeName>
        <fullName>Exosome component 8</fullName>
    </alternativeName>
    <alternativeName>
        <fullName>Opa-interacting protein 2</fullName>
        <shortName>OIP-2</shortName>
    </alternativeName>
    <alternativeName>
        <fullName>Ribosomal RNA-processing protein 43</fullName>
    </alternativeName>
    <alternativeName>
        <fullName>p9</fullName>
    </alternativeName>
</protein>